<comment type="function">
    <text evidence="1">Involved in transcription antitermination. Required for transcription of ribosomal RNA (rRNA) genes. Binds specifically to the boxA antiterminator sequence of the ribosomal RNA (rrn) operons.</text>
</comment>
<comment type="similarity">
    <text evidence="1">Belongs to the NusB family.</text>
</comment>
<protein>
    <recommendedName>
        <fullName evidence="1">Transcription antitermination protein NusB</fullName>
    </recommendedName>
    <alternativeName>
        <fullName evidence="1">Antitermination factor NusB</fullName>
    </alternativeName>
</protein>
<dbReference type="EMBL" id="CP000243">
    <property type="protein sequence ID" value="ABE05940.1"/>
    <property type="molecule type" value="Genomic_DNA"/>
</dbReference>
<dbReference type="RefSeq" id="WP_000801125.1">
    <property type="nucleotide sequence ID" value="NZ_CP064825.1"/>
</dbReference>
<dbReference type="SMR" id="Q1RFC4"/>
<dbReference type="GeneID" id="93777044"/>
<dbReference type="KEGG" id="eci:UTI89_C0439"/>
<dbReference type="HOGENOM" id="CLU_087843_4_1_6"/>
<dbReference type="Proteomes" id="UP000001952">
    <property type="component" value="Chromosome"/>
</dbReference>
<dbReference type="GO" id="GO:0005829">
    <property type="term" value="C:cytosol"/>
    <property type="evidence" value="ECO:0007669"/>
    <property type="project" value="TreeGrafter"/>
</dbReference>
<dbReference type="GO" id="GO:0003723">
    <property type="term" value="F:RNA binding"/>
    <property type="evidence" value="ECO:0007669"/>
    <property type="project" value="UniProtKB-UniRule"/>
</dbReference>
<dbReference type="GO" id="GO:0006353">
    <property type="term" value="P:DNA-templated transcription termination"/>
    <property type="evidence" value="ECO:0007669"/>
    <property type="project" value="UniProtKB-UniRule"/>
</dbReference>
<dbReference type="GO" id="GO:0031564">
    <property type="term" value="P:transcription antitermination"/>
    <property type="evidence" value="ECO:0007669"/>
    <property type="project" value="UniProtKB-KW"/>
</dbReference>
<dbReference type="CDD" id="cd00619">
    <property type="entry name" value="Terminator_NusB"/>
    <property type="match status" value="1"/>
</dbReference>
<dbReference type="FunFam" id="1.10.940.10:FF:000001">
    <property type="entry name" value="Transcription antitermination factor NusB"/>
    <property type="match status" value="1"/>
</dbReference>
<dbReference type="Gene3D" id="1.10.940.10">
    <property type="entry name" value="NusB-like"/>
    <property type="match status" value="1"/>
</dbReference>
<dbReference type="HAMAP" id="MF_00073">
    <property type="entry name" value="NusB"/>
    <property type="match status" value="1"/>
</dbReference>
<dbReference type="InterPro" id="IPR035926">
    <property type="entry name" value="NusB-like_sf"/>
</dbReference>
<dbReference type="InterPro" id="IPR011605">
    <property type="entry name" value="NusB_fam"/>
</dbReference>
<dbReference type="InterPro" id="IPR006027">
    <property type="entry name" value="NusB_RsmB_TIM44"/>
</dbReference>
<dbReference type="NCBIfam" id="TIGR01951">
    <property type="entry name" value="nusB"/>
    <property type="match status" value="1"/>
</dbReference>
<dbReference type="PANTHER" id="PTHR11078:SF3">
    <property type="entry name" value="ANTITERMINATION NUSB DOMAIN-CONTAINING PROTEIN"/>
    <property type="match status" value="1"/>
</dbReference>
<dbReference type="PANTHER" id="PTHR11078">
    <property type="entry name" value="N UTILIZATION SUBSTANCE PROTEIN B-RELATED"/>
    <property type="match status" value="1"/>
</dbReference>
<dbReference type="Pfam" id="PF01029">
    <property type="entry name" value="NusB"/>
    <property type="match status" value="1"/>
</dbReference>
<dbReference type="SUPFAM" id="SSF48013">
    <property type="entry name" value="NusB-like"/>
    <property type="match status" value="1"/>
</dbReference>
<gene>
    <name evidence="1" type="primary">nusB</name>
    <name type="ordered locus">UTI89_C0439</name>
</gene>
<organism>
    <name type="scientific">Escherichia coli (strain UTI89 / UPEC)</name>
    <dbReference type="NCBI Taxonomy" id="364106"/>
    <lineage>
        <taxon>Bacteria</taxon>
        <taxon>Pseudomonadati</taxon>
        <taxon>Pseudomonadota</taxon>
        <taxon>Gammaproteobacteria</taxon>
        <taxon>Enterobacterales</taxon>
        <taxon>Enterobacteriaceae</taxon>
        <taxon>Escherichia</taxon>
    </lineage>
</organism>
<keyword id="KW-0694">RNA-binding</keyword>
<keyword id="KW-0804">Transcription</keyword>
<keyword id="KW-0889">Transcription antitermination</keyword>
<keyword id="KW-0805">Transcription regulation</keyword>
<reference key="1">
    <citation type="journal article" date="2006" name="Proc. Natl. Acad. Sci. U.S.A.">
        <title>Identification of genes subject to positive selection in uropathogenic strains of Escherichia coli: a comparative genomics approach.</title>
        <authorList>
            <person name="Chen S.L."/>
            <person name="Hung C.-S."/>
            <person name="Xu J."/>
            <person name="Reigstad C.S."/>
            <person name="Magrini V."/>
            <person name="Sabo A."/>
            <person name="Blasiar D."/>
            <person name="Bieri T."/>
            <person name="Meyer R.R."/>
            <person name="Ozersky P."/>
            <person name="Armstrong J.R."/>
            <person name="Fulton R.S."/>
            <person name="Latreille J.P."/>
            <person name="Spieth J."/>
            <person name="Hooton T.M."/>
            <person name="Mardis E.R."/>
            <person name="Hultgren S.J."/>
            <person name="Gordon J.I."/>
        </authorList>
    </citation>
    <scope>NUCLEOTIDE SEQUENCE [LARGE SCALE GENOMIC DNA]</scope>
    <source>
        <strain>UTI89 / UPEC</strain>
    </source>
</reference>
<name>NUSB_ECOUT</name>
<accession>Q1RFC4</accession>
<proteinExistence type="inferred from homology"/>
<sequence>MKPAARRRARECAVQALYSWQLSQNDIADVEYQFLAEQDVKDVDVLYFRELLAGVATNTAYLDGLMKPYLSRLLEELGQVEKAVLRIALYELSKRSDVPYKVAINEAIELAKSFGAEDSHKFVNGVLDKAAPVIRPNKK</sequence>
<feature type="chain" id="PRO_0000265520" description="Transcription antitermination protein NusB">
    <location>
        <begin position="1"/>
        <end position="139"/>
    </location>
</feature>
<evidence type="ECO:0000255" key="1">
    <source>
        <dbReference type="HAMAP-Rule" id="MF_00073"/>
    </source>
</evidence>